<accession>B3PEU9</accession>
<keyword id="KW-0963">Cytoplasm</keyword>
<keyword id="KW-0444">Lipid biosynthesis</keyword>
<keyword id="KW-0443">Lipid metabolism</keyword>
<keyword id="KW-0594">Phospholipid biosynthesis</keyword>
<keyword id="KW-1208">Phospholipid metabolism</keyword>
<keyword id="KW-1185">Reference proteome</keyword>
<keyword id="KW-0808">Transferase</keyword>
<proteinExistence type="inferred from homology"/>
<sequence>MSATIRIAVDAMSGDLGPRVAIDAAQNFLQCHSDLEITLVGDESQLQQAHSLTGKNSRLHYLHAPDVVTMADDPLSALRHKKNSSMWKSLELLCLDRADACVSAGNTGALLAMARHQIKTLPGIERPAICKSMPVRSGVTYLLDLGANIDVGPELLHQFALMGAALARAAGVANPRVSLLNIGTEEYKGTQVLQQAQVLLQSDNSFTYSGFVEANRIFNGDVDVIVCDGFHGNVALKASEGVAQFIADKIAVEFKRHVFSRVMAFLAWPTLRRLKLQLNPARYNGASFLGLQKPVIKSHGNANEQAFIHALEVALQQVQERVPQRILEQISLH</sequence>
<evidence type="ECO:0000255" key="1">
    <source>
        <dbReference type="HAMAP-Rule" id="MF_00019"/>
    </source>
</evidence>
<protein>
    <recommendedName>
        <fullName evidence="1">Phosphate acyltransferase</fullName>
        <ecNumber evidence="1">2.3.1.274</ecNumber>
    </recommendedName>
    <alternativeName>
        <fullName evidence="1">Acyl-ACP phosphotransacylase</fullName>
    </alternativeName>
    <alternativeName>
        <fullName evidence="1">Acyl-[acyl-carrier-protein]--phosphate acyltransferase</fullName>
    </alternativeName>
    <alternativeName>
        <fullName evidence="1">Phosphate-acyl-ACP acyltransferase</fullName>
    </alternativeName>
</protein>
<gene>
    <name evidence="1" type="primary">plsX</name>
    <name type="ordered locus">CJA_1674</name>
</gene>
<feature type="chain" id="PRO_1000089887" description="Phosphate acyltransferase">
    <location>
        <begin position="1"/>
        <end position="333"/>
    </location>
</feature>
<organism>
    <name type="scientific">Cellvibrio japonicus (strain Ueda107)</name>
    <name type="common">Pseudomonas fluorescens subsp. cellulosa</name>
    <dbReference type="NCBI Taxonomy" id="498211"/>
    <lineage>
        <taxon>Bacteria</taxon>
        <taxon>Pseudomonadati</taxon>
        <taxon>Pseudomonadota</taxon>
        <taxon>Gammaproteobacteria</taxon>
        <taxon>Cellvibrionales</taxon>
        <taxon>Cellvibrionaceae</taxon>
        <taxon>Cellvibrio</taxon>
    </lineage>
</organism>
<name>PLSX_CELJU</name>
<dbReference type="EC" id="2.3.1.274" evidence="1"/>
<dbReference type="EMBL" id="CP000934">
    <property type="protein sequence ID" value="ACE83571.1"/>
    <property type="molecule type" value="Genomic_DNA"/>
</dbReference>
<dbReference type="RefSeq" id="WP_012487297.1">
    <property type="nucleotide sequence ID" value="NC_010995.1"/>
</dbReference>
<dbReference type="SMR" id="B3PEU9"/>
<dbReference type="STRING" id="498211.CJA_1674"/>
<dbReference type="KEGG" id="cja:CJA_1674"/>
<dbReference type="eggNOG" id="COG0416">
    <property type="taxonomic scope" value="Bacteria"/>
</dbReference>
<dbReference type="HOGENOM" id="CLU_039379_1_0_6"/>
<dbReference type="OrthoDB" id="9806408at2"/>
<dbReference type="UniPathway" id="UPA00085"/>
<dbReference type="Proteomes" id="UP000001036">
    <property type="component" value="Chromosome"/>
</dbReference>
<dbReference type="GO" id="GO:0005737">
    <property type="term" value="C:cytoplasm"/>
    <property type="evidence" value="ECO:0007669"/>
    <property type="project" value="UniProtKB-SubCell"/>
</dbReference>
<dbReference type="GO" id="GO:0043811">
    <property type="term" value="F:phosphate:acyl-[acyl carrier protein] acyltransferase activity"/>
    <property type="evidence" value="ECO:0007669"/>
    <property type="project" value="UniProtKB-UniRule"/>
</dbReference>
<dbReference type="GO" id="GO:0006633">
    <property type="term" value="P:fatty acid biosynthetic process"/>
    <property type="evidence" value="ECO:0007669"/>
    <property type="project" value="UniProtKB-UniRule"/>
</dbReference>
<dbReference type="GO" id="GO:0008654">
    <property type="term" value="P:phospholipid biosynthetic process"/>
    <property type="evidence" value="ECO:0007669"/>
    <property type="project" value="UniProtKB-KW"/>
</dbReference>
<dbReference type="Gene3D" id="3.40.718.10">
    <property type="entry name" value="Isopropylmalate Dehydrogenase"/>
    <property type="match status" value="1"/>
</dbReference>
<dbReference type="HAMAP" id="MF_00019">
    <property type="entry name" value="PlsX"/>
    <property type="match status" value="1"/>
</dbReference>
<dbReference type="InterPro" id="IPR003664">
    <property type="entry name" value="FA_synthesis"/>
</dbReference>
<dbReference type="InterPro" id="IPR012281">
    <property type="entry name" value="Phospholipid_synth_PlsX-like"/>
</dbReference>
<dbReference type="NCBIfam" id="TIGR00182">
    <property type="entry name" value="plsX"/>
    <property type="match status" value="1"/>
</dbReference>
<dbReference type="PANTHER" id="PTHR30100">
    <property type="entry name" value="FATTY ACID/PHOSPHOLIPID SYNTHESIS PROTEIN PLSX"/>
    <property type="match status" value="1"/>
</dbReference>
<dbReference type="PANTHER" id="PTHR30100:SF1">
    <property type="entry name" value="PHOSPHATE ACYLTRANSFERASE"/>
    <property type="match status" value="1"/>
</dbReference>
<dbReference type="Pfam" id="PF02504">
    <property type="entry name" value="FA_synthesis"/>
    <property type="match status" value="1"/>
</dbReference>
<dbReference type="PIRSF" id="PIRSF002465">
    <property type="entry name" value="Phsphlp_syn_PlsX"/>
    <property type="match status" value="1"/>
</dbReference>
<dbReference type="SUPFAM" id="SSF53659">
    <property type="entry name" value="Isocitrate/Isopropylmalate dehydrogenase-like"/>
    <property type="match status" value="1"/>
</dbReference>
<comment type="function">
    <text evidence="1">Catalyzes the reversible formation of acyl-phosphate (acyl-PO(4)) from acyl-[acyl-carrier-protein] (acyl-ACP). This enzyme utilizes acyl-ACP as fatty acyl donor, but not acyl-CoA.</text>
</comment>
<comment type="catalytic activity">
    <reaction evidence="1">
        <text>a fatty acyl-[ACP] + phosphate = an acyl phosphate + holo-[ACP]</text>
        <dbReference type="Rhea" id="RHEA:42292"/>
        <dbReference type="Rhea" id="RHEA-COMP:9685"/>
        <dbReference type="Rhea" id="RHEA-COMP:14125"/>
        <dbReference type="ChEBI" id="CHEBI:43474"/>
        <dbReference type="ChEBI" id="CHEBI:59918"/>
        <dbReference type="ChEBI" id="CHEBI:64479"/>
        <dbReference type="ChEBI" id="CHEBI:138651"/>
        <dbReference type="EC" id="2.3.1.274"/>
    </reaction>
</comment>
<comment type="pathway">
    <text evidence="1">Lipid metabolism; phospholipid metabolism.</text>
</comment>
<comment type="subunit">
    <text evidence="1">Homodimer. Probably interacts with PlsY.</text>
</comment>
<comment type="subcellular location">
    <subcellularLocation>
        <location evidence="1">Cytoplasm</location>
    </subcellularLocation>
    <text evidence="1">Associated with the membrane possibly through PlsY.</text>
</comment>
<comment type="similarity">
    <text evidence="1">Belongs to the PlsX family.</text>
</comment>
<reference key="1">
    <citation type="journal article" date="2008" name="J. Bacteriol.">
        <title>Insights into plant cell wall degradation from the genome sequence of the soil bacterium Cellvibrio japonicus.</title>
        <authorList>
            <person name="DeBoy R.T."/>
            <person name="Mongodin E.F."/>
            <person name="Fouts D.E."/>
            <person name="Tailford L.E."/>
            <person name="Khouri H."/>
            <person name="Emerson J.B."/>
            <person name="Mohamoud Y."/>
            <person name="Watkins K."/>
            <person name="Henrissat B."/>
            <person name="Gilbert H.J."/>
            <person name="Nelson K.E."/>
        </authorList>
    </citation>
    <scope>NUCLEOTIDE SEQUENCE [LARGE SCALE GENOMIC DNA]</scope>
    <source>
        <strain>Ueda107</strain>
    </source>
</reference>